<dbReference type="EMBL" id="M64064">
    <property type="protein sequence ID" value="AAA23143.1"/>
    <property type="molecule type" value="Genomic_DNA"/>
</dbReference>
<dbReference type="EMBL" id="M69230">
    <property type="protein sequence ID" value="AAA73071.1"/>
    <property type="molecule type" value="Genomic_DNA"/>
</dbReference>
<dbReference type="EMBL" id="AF131889">
    <property type="protein sequence ID" value="AAD22492.1"/>
    <property type="molecule type" value="Genomic_DNA"/>
</dbReference>
<dbReference type="EMBL" id="AE001363">
    <property type="protein sequence ID" value="AAD18834.1"/>
    <property type="molecule type" value="Genomic_DNA"/>
</dbReference>
<dbReference type="EMBL" id="AE002161">
    <property type="protein sequence ID" value="AAF37944.1"/>
    <property type="molecule type" value="Genomic_DNA"/>
</dbReference>
<dbReference type="EMBL" id="BA000008">
    <property type="protein sequence ID" value="BAA98902.1"/>
    <property type="molecule type" value="Genomic_DNA"/>
</dbReference>
<dbReference type="EMBL" id="AE009440">
    <property type="protein sequence ID" value="AAP98651.1"/>
    <property type="molecule type" value="Genomic_DNA"/>
</dbReference>
<dbReference type="EMBL" id="S50607">
    <property type="protein sequence ID" value="AAB24363.1"/>
    <property type="molecule type" value="Genomic_DNA"/>
</dbReference>
<dbReference type="PIR" id="A43587">
    <property type="entry name" value="A43587"/>
</dbReference>
<dbReference type="PIR" id="D86577">
    <property type="entry name" value="D86577"/>
</dbReference>
<dbReference type="RefSeq" id="NP_224891.1">
    <property type="nucleotide sequence ID" value="NC_000922.1"/>
</dbReference>
<dbReference type="RefSeq" id="WP_010883333.1">
    <property type="nucleotide sequence ID" value="NZ_LN847257.1"/>
</dbReference>
<dbReference type="GeneID" id="45050746"/>
<dbReference type="KEGG" id="cpa:CP_0051"/>
<dbReference type="KEGG" id="cpj:ompA"/>
<dbReference type="KEGG" id="cpn:CPn_0695"/>
<dbReference type="KEGG" id="cpt:CpB0722"/>
<dbReference type="PATRIC" id="fig|115713.3.peg.769"/>
<dbReference type="eggNOG" id="ENOG502ZVFZ">
    <property type="taxonomic scope" value="Bacteria"/>
</dbReference>
<dbReference type="HOGENOM" id="CLU_693881_0_0_0"/>
<dbReference type="OrthoDB" id="18912at2"/>
<dbReference type="Proteomes" id="UP000000583">
    <property type="component" value="Chromosome"/>
</dbReference>
<dbReference type="Proteomes" id="UP000000801">
    <property type="component" value="Chromosome"/>
</dbReference>
<dbReference type="GO" id="GO:0009279">
    <property type="term" value="C:cell outer membrane"/>
    <property type="evidence" value="ECO:0007669"/>
    <property type="project" value="UniProtKB-SubCell"/>
</dbReference>
<dbReference type="GO" id="GO:0009986">
    <property type="term" value="C:cell surface"/>
    <property type="evidence" value="ECO:0000314"/>
    <property type="project" value="CAFA"/>
</dbReference>
<dbReference type="GO" id="GO:0046930">
    <property type="term" value="C:pore complex"/>
    <property type="evidence" value="ECO:0007669"/>
    <property type="project" value="UniProtKB-KW"/>
</dbReference>
<dbReference type="GO" id="GO:0020003">
    <property type="term" value="C:symbiont-containing vacuole"/>
    <property type="evidence" value="ECO:0000314"/>
    <property type="project" value="CAFA"/>
</dbReference>
<dbReference type="GO" id="GO:0015288">
    <property type="term" value="F:porin activity"/>
    <property type="evidence" value="ECO:0007669"/>
    <property type="project" value="UniProtKB-KW"/>
</dbReference>
<dbReference type="GO" id="GO:0005198">
    <property type="term" value="F:structural molecule activity"/>
    <property type="evidence" value="ECO:0007669"/>
    <property type="project" value="InterPro"/>
</dbReference>
<dbReference type="GO" id="GO:0006811">
    <property type="term" value="P:monoatomic ion transport"/>
    <property type="evidence" value="ECO:0007669"/>
    <property type="project" value="UniProtKB-KW"/>
</dbReference>
<dbReference type="GO" id="GO:0008360">
    <property type="term" value="P:regulation of cell shape"/>
    <property type="evidence" value="ECO:0007669"/>
    <property type="project" value="UniProtKB-KW"/>
</dbReference>
<dbReference type="InterPro" id="IPR000604">
    <property type="entry name" value="Major_OMP_Chlamydia"/>
</dbReference>
<dbReference type="Pfam" id="PF01308">
    <property type="entry name" value="Chlam_OMP"/>
    <property type="match status" value="1"/>
</dbReference>
<dbReference type="PRINTS" id="PR01334">
    <property type="entry name" value="CHLAMIDIAOMP"/>
</dbReference>
<gene>
    <name type="primary">ompA</name>
    <name type="synonym">omp1</name>
    <name type="ordered locus">CPn_0695</name>
    <name type="ordered locus">CP_0051</name>
    <name type="ordered locus">CpB0722</name>
</gene>
<accession>P27455</accession>
<accession>Q6LDD2</accession>
<accession>Q9JQF6</accession>
<name>MOMP_CHLPN</name>
<protein>
    <recommendedName>
        <fullName>Major outer membrane porin</fullName>
        <shortName>MOMP</shortName>
    </recommendedName>
</protein>
<evidence type="ECO:0000250" key="1"/>
<evidence type="ECO:0000305" key="2"/>
<sequence>MKKLLKSALLSAAFAGSVGSLQALPVGNPSDPSLLIDGTIWEGAAGDPCDPCATWCDAISLRAGFYGDYVFDRILKVDAPKTFSMGAKPTGSAAANYTTAVDRPNPAYNKHLHDAEWFTNAGFIALNIWDRFDVFCTLGASNGYIRGNSTAFNLVGLFGVKGTTVNANELPNVSLSNGVVELYTDTSFSWSVGARGALWECGCATLGAEFQYAQSKPKVEELNVICNVSQFSVNKPKGYKGVAFPLPTDAGVATATGTKSATINYHEWQVGASLSYRLNSLVPYIGVQWSRATFDADNIRIAQPKLPTAVLNLTAWNPSLLGNATALSTTDSFSDFMQIVSCQINKFKSRKACGVTVGATLVDADKWSLTAEARLINERAAHVSGQFRF</sequence>
<organism>
    <name type="scientific">Chlamydia pneumoniae</name>
    <name type="common">Chlamydophila pneumoniae</name>
    <dbReference type="NCBI Taxonomy" id="83558"/>
    <lineage>
        <taxon>Bacteria</taxon>
        <taxon>Pseudomonadati</taxon>
        <taxon>Chlamydiota</taxon>
        <taxon>Chlamydiia</taxon>
        <taxon>Chlamydiales</taxon>
        <taxon>Chlamydiaceae</taxon>
        <taxon>Chlamydia/Chlamydophila group</taxon>
        <taxon>Chlamydia</taxon>
    </lineage>
</organism>
<keyword id="KW-0998">Cell outer membrane</keyword>
<keyword id="KW-0133">Cell shape</keyword>
<keyword id="KW-1015">Disulfide bond</keyword>
<keyword id="KW-0406">Ion transport</keyword>
<keyword id="KW-0472">Membrane</keyword>
<keyword id="KW-0626">Porin</keyword>
<keyword id="KW-0732">Signal</keyword>
<keyword id="KW-0812">Transmembrane</keyword>
<keyword id="KW-1134">Transmembrane beta strand</keyword>
<keyword id="KW-0813">Transport</keyword>
<proteinExistence type="evidence at transcript level"/>
<comment type="function">
    <text evidence="1">In elementary bodies (EBs, the infectious stage, which is able to survive outside the host cell) provides the structural integrity of the outer envelope through disulfide cross-links with the small cysteine-rich protein and the large cysteine-rich periplasmic protein. It has been described in publications as the Sarkosyl-insoluble COMC (Chlamydia outer membrane complex), and serves as the functional equivalent of peptidoglycan (By similarity).</text>
</comment>
<comment type="function">
    <text evidence="1">Permits diffusion of specific solutes through the outer membrane.</text>
</comment>
<comment type="subunit">
    <text>Part of a disulfide cross-linked outer membrane complex (COMC) composed of the major outer membrane porin (MOMP), the small cysteine-rich protein (OmcA) and the large cysteine-rich periplasmic protein (OmcB).</text>
</comment>
<comment type="subcellular location">
    <subcellularLocation>
        <location evidence="1">Cell outer membrane</location>
        <topology evidence="1">Multi-pass membrane protein</topology>
    </subcellularLocation>
</comment>
<comment type="developmental stage">
    <text>It is present but some of the disulfide bonds are reduced in reticulate bodies (RBs).</text>
</comment>
<comment type="similarity">
    <text evidence="2">Belongs to the chlamydial porin (CP) (TC 1.B.2) family.</text>
</comment>
<feature type="signal peptide">
    <location>
        <begin position="1"/>
        <end position="23"/>
    </location>
</feature>
<feature type="chain" id="PRO_0000020140" description="Major outer membrane porin">
    <location>
        <begin position="24"/>
        <end position="389"/>
    </location>
</feature>
<reference key="1">
    <citation type="journal article" date="1991" name="J. Gen. Microbiol.">
        <title>Nucleotide sequence and taxonomic value of the major outer membrane protein gene of Chlamydia pneumoniae IOL-207.</title>
        <authorList>
            <person name="Carter M.W."/>
            <person name="Al-Mahdawi S.A.H."/>
            <person name="Giles I.G."/>
            <person name="Treharne J.D."/>
            <person name="Ward M.E."/>
            <person name="Clarke I.N."/>
        </authorList>
    </citation>
    <scope>NUCLEOTIDE SEQUENCE [GENOMIC DNA]</scope>
    <source>
        <strain>IOL-207</strain>
    </source>
</reference>
<reference key="2">
    <citation type="journal article" date="1991" name="Infect. Immun.">
        <title>Sequence analysis of the major outer membrane protein gene of Chlamydia pneumoniae.</title>
        <authorList>
            <person name="Perez Melgosa M."/>
            <person name="Kuo C.-C."/>
            <person name="Campbell L.A."/>
        </authorList>
    </citation>
    <scope>NUCLEOTIDE SEQUENCE [GENOMIC DNA]</scope>
    <source>
        <strain>TWAR</strain>
    </source>
</reference>
<reference key="3">
    <citation type="journal article" date="1998" name="Neurology">
        <title>Multiple sclerosis associated with Chlamydia pneumoniae infection of the CNS.</title>
        <authorList>
            <person name="Sriram S."/>
            <person name="Mitchell W."/>
            <person name="Stratton C."/>
        </authorList>
    </citation>
    <scope>NUCLEOTIDE SEQUENCE [GENOMIC DNA]</scope>
</reference>
<reference key="4">
    <citation type="journal article" date="1999" name="Nat. Genet.">
        <title>Comparative genomes of Chlamydia pneumoniae and C. trachomatis.</title>
        <authorList>
            <person name="Kalman S."/>
            <person name="Mitchell W.P."/>
            <person name="Marathe R."/>
            <person name="Lammel C.J."/>
            <person name="Fan J."/>
            <person name="Hyman R.W."/>
            <person name="Olinger L."/>
            <person name="Grimwood J."/>
            <person name="Davis R.W."/>
            <person name="Stephens R.S."/>
        </authorList>
    </citation>
    <scope>NUCLEOTIDE SEQUENCE [LARGE SCALE GENOMIC DNA]</scope>
    <source>
        <strain>CWL029</strain>
    </source>
</reference>
<reference key="5">
    <citation type="journal article" date="2000" name="Nucleic Acids Res.">
        <title>Genome sequences of Chlamydia trachomatis MoPn and Chlamydia pneumoniae AR39.</title>
        <authorList>
            <person name="Read T.D."/>
            <person name="Brunham R.C."/>
            <person name="Shen C."/>
            <person name="Gill S.R."/>
            <person name="Heidelberg J.F."/>
            <person name="White O."/>
            <person name="Hickey E.K."/>
            <person name="Peterson J.D."/>
            <person name="Utterback T.R."/>
            <person name="Berry K.J."/>
            <person name="Bass S."/>
            <person name="Linher K.D."/>
            <person name="Weidman J.F."/>
            <person name="Khouri H.M."/>
            <person name="Craven B."/>
            <person name="Bowman C."/>
            <person name="Dodson R.J."/>
            <person name="Gwinn M.L."/>
            <person name="Nelson W.C."/>
            <person name="DeBoy R.T."/>
            <person name="Kolonay J.F."/>
            <person name="McClarty G."/>
            <person name="Salzberg S.L."/>
            <person name="Eisen J.A."/>
            <person name="Fraser C.M."/>
        </authorList>
    </citation>
    <scope>NUCLEOTIDE SEQUENCE [LARGE SCALE GENOMIC DNA]</scope>
    <source>
        <strain>AR39</strain>
    </source>
</reference>
<reference key="6">
    <citation type="journal article" date="2000" name="Nucleic Acids Res.">
        <title>Comparison of whole genome sequences of Chlamydia pneumoniae J138 from Japan and CWL029 from USA.</title>
        <authorList>
            <person name="Shirai M."/>
            <person name="Hirakawa H."/>
            <person name="Kimoto M."/>
            <person name="Tabuchi M."/>
            <person name="Kishi F."/>
            <person name="Ouchi K."/>
            <person name="Shiba T."/>
            <person name="Ishii K."/>
            <person name="Hattori M."/>
            <person name="Kuhara S."/>
            <person name="Nakazawa T."/>
        </authorList>
    </citation>
    <scope>NUCLEOTIDE SEQUENCE [LARGE SCALE GENOMIC DNA]</scope>
    <source>
        <strain>J138</strain>
    </source>
</reference>
<reference key="7">
    <citation type="journal article" date="2000" name="J. Infect. Dis. 181 Suppl.">
        <title>Comparison of outer membrane protein genes omp and pmp in the whole genome sequences of Chlamydia pneumoniae isolates from Japan and the United States.</title>
        <authorList>
            <person name="Shirai M."/>
            <person name="Hirakawa H."/>
            <person name="Ouchi K."/>
            <person name="Tabuchi M."/>
            <person name="Kishi F."/>
            <person name="Kimoto M."/>
            <person name="Takeuchi H."/>
            <person name="Nishida J."/>
            <person name="Shibata K."/>
            <person name="Fujinaga R."/>
            <person name="Yoneda H."/>
            <person name="Matsushima H."/>
            <person name="Tanaka C."/>
            <person name="Furukawa S."/>
            <person name="Miura K."/>
            <person name="Nakazawa A."/>
            <person name="Ishii K."/>
            <person name="Shiba T."/>
            <person name="Hattori M."/>
            <person name="Kuhara S."/>
            <person name="Nakazawa T."/>
        </authorList>
    </citation>
    <scope>NUCLEOTIDE SEQUENCE [GENOMIC DNA]</scope>
    <source>
        <strain>J138</strain>
    </source>
</reference>
<reference key="8">
    <citation type="submission" date="2002-05" db="EMBL/GenBank/DDBJ databases">
        <title>The genome sequence of Chlamydia pneumoniae TW183 and comparison with other Chlamydia strains based on whole genome sequence analysis.</title>
        <authorList>
            <person name="Geng M.M."/>
            <person name="Schuhmacher A."/>
            <person name="Muehldorfer I."/>
            <person name="Bensch K.W."/>
            <person name="Schaefer K.P."/>
            <person name="Schneider S."/>
            <person name="Pohl T."/>
            <person name="Essig A."/>
            <person name="Marre R."/>
            <person name="Melchers K."/>
        </authorList>
    </citation>
    <scope>NUCLEOTIDE SEQUENCE [LARGE SCALE GENOMIC DNA]</scope>
    <source>
        <strain>TW-183</strain>
    </source>
</reference>
<reference key="9">
    <citation type="journal article" date="1992" name="Infect. Immun.">
        <title>Similarity of Chlamydia pneumoniae strains in the variable domain IV region of the major outer membrane protein gene.</title>
        <authorList>
            <person name="Gaydos C.A."/>
            <person name="Quinn T.C."/>
            <person name="Bobo L.D."/>
            <person name="Eiden J.J."/>
        </authorList>
    </citation>
    <scope>NUCLEOTIDE SEQUENCE [GENOMIC DNA] OF 297-352</scope>
</reference>